<name>GLB3_ARATH</name>
<gene>
    <name type="primary">GLB3</name>
    <name type="ordered locus">At4g32690</name>
    <name type="ORF">F4D11.110</name>
</gene>
<sequence>MQSLQDKASVLSGVDQAEAFAIDESNLFDKLGLQTFINLSTNFYTRVYDDEEEWFQSIFSNSNKEDAIQNQYEFFVQRMGGPPLYSQRKGHPALIGRHRPFPVTHQAAERWLEHMQNALDDSVDIDQDSKIKMMKFFRHTAFFLVAGNELKNQNEKPKHKPQCACKHAANKPAEE</sequence>
<accession>Q67XG0</accession>
<accession>O65532</accession>
<accession>Q946U7</accession>
<protein>
    <recommendedName>
        <fullName>Two-on-two hemoglobin-3</fullName>
        <shortName>AtGLB3</shortName>
    </recommendedName>
    <alternativeName>
        <fullName>2-on-2 hemoglobin-3</fullName>
    </alternativeName>
</protein>
<organism>
    <name type="scientific">Arabidopsis thaliana</name>
    <name type="common">Mouse-ear cress</name>
    <dbReference type="NCBI Taxonomy" id="3702"/>
    <lineage>
        <taxon>Eukaryota</taxon>
        <taxon>Viridiplantae</taxon>
        <taxon>Streptophyta</taxon>
        <taxon>Embryophyta</taxon>
        <taxon>Tracheophyta</taxon>
        <taxon>Spermatophyta</taxon>
        <taxon>Magnoliopsida</taxon>
        <taxon>eudicotyledons</taxon>
        <taxon>Gunneridae</taxon>
        <taxon>Pentapetalae</taxon>
        <taxon>rosids</taxon>
        <taxon>malvids</taxon>
        <taxon>Brassicales</taxon>
        <taxon>Brassicaceae</taxon>
        <taxon>Camelineae</taxon>
        <taxon>Arabidopsis</taxon>
    </lineage>
</organism>
<comment type="function">
    <text evidence="3 4 6">Hemoglobin-like protein that exhibits an unusual concentration-independent binding of O(2) and CO. May promote shoot organogenesis from root explants in vitro (PubMed:11526234, PubMed:21741261). Inhibits RGLG3 and RGLG4 ubiquitination activity (PubMed:27497447).</text>
</comment>
<comment type="cofactor">
    <cofactor evidence="5">
        <name>heme</name>
        <dbReference type="ChEBI" id="CHEBI:30413"/>
    </cofactor>
    <text evidence="5">Binds 1 heme group per subunit.</text>
</comment>
<comment type="biophysicochemical properties">
    <absorption>
        <max evidence="3">411 nm</max>
        <text>The absorbance spectrum of deoxy-GLB3 is unique as the protein forms a transient six-coordinate structure with absorption peaks at 538 and 565 nm after reduction and deoxygenation, which slowly converts to a five-coordinate structure with an absorption peak at 548 nm.</text>
    </absorption>
</comment>
<comment type="subunit">
    <text evidence="6 7">Homodimer when ferric (Probable). Interacts with RGLG3 and RGLG4 (PubMed:27497447).</text>
</comment>
<comment type="tissue specificity">
    <text evidence="3">Expressed ubiquitously, with higher levels in root tissue than in shoot tissue.</text>
</comment>
<comment type="disruption phenotype">
    <text evidence="4">Slight reduction of the number of shoots produced by root explants in vitro; root explants are first cultured on an initial auxin-rich callus induction medium (CIM) followed by a transfer onto a cytokinin-containing shoot induction medium (SIM).</text>
</comment>
<comment type="similarity">
    <text evidence="7">Belongs to the truncated hemoglobin family. Group II subfamily.</text>
</comment>
<comment type="sequence caution" evidence="7">
    <conflict type="erroneous gene model prediction">
        <sequence resource="EMBL-CDS" id="CAA18592"/>
    </conflict>
</comment>
<comment type="sequence caution" evidence="7">
    <conflict type="erroneous gene model prediction">
        <sequence resource="EMBL-CDS" id="CAB79986"/>
    </conflict>
</comment>
<dbReference type="EMBL" id="AF376062">
    <property type="protein sequence ID" value="AAK55409.1"/>
    <property type="molecule type" value="mRNA"/>
</dbReference>
<dbReference type="EMBL" id="AL022537">
    <property type="protein sequence ID" value="CAA18592.1"/>
    <property type="status" value="ALT_SEQ"/>
    <property type="molecule type" value="Genomic_DNA"/>
</dbReference>
<dbReference type="EMBL" id="AL161581">
    <property type="protein sequence ID" value="CAB79986.1"/>
    <property type="status" value="ALT_SEQ"/>
    <property type="molecule type" value="Genomic_DNA"/>
</dbReference>
<dbReference type="EMBL" id="CP002687">
    <property type="protein sequence ID" value="AEE86104.1"/>
    <property type="molecule type" value="Genomic_DNA"/>
</dbReference>
<dbReference type="EMBL" id="AK175236">
    <property type="protein sequence ID" value="BAD42999.1"/>
    <property type="molecule type" value="mRNA"/>
</dbReference>
<dbReference type="EMBL" id="AK176859">
    <property type="protein sequence ID" value="BAD44622.1"/>
    <property type="molecule type" value="mRNA"/>
</dbReference>
<dbReference type="EMBL" id="AK220670">
    <property type="protein sequence ID" value="BAD95217.1"/>
    <property type="molecule type" value="mRNA"/>
</dbReference>
<dbReference type="EMBL" id="AK229442">
    <property type="protein sequence ID" value="BAF01302.1"/>
    <property type="molecule type" value="mRNA"/>
</dbReference>
<dbReference type="EMBL" id="BT024768">
    <property type="protein sequence ID" value="ABD59106.1"/>
    <property type="molecule type" value="mRNA"/>
</dbReference>
<dbReference type="PIR" id="T04457">
    <property type="entry name" value="T04457"/>
</dbReference>
<dbReference type="RefSeq" id="NP_567901.1">
    <property type="nucleotide sequence ID" value="NM_119421.5"/>
</dbReference>
<dbReference type="PDB" id="4C0N">
    <property type="method" value="X-ray"/>
    <property type="resolution" value="1.77 A"/>
    <property type="chains" value="A=1-175"/>
</dbReference>
<dbReference type="PDB" id="4C44">
    <property type="method" value="X-ray"/>
    <property type="resolution" value="2.65 A"/>
    <property type="chains" value="A=1-175"/>
</dbReference>
<dbReference type="PDBsum" id="4C0N"/>
<dbReference type="PDBsum" id="4C44"/>
<dbReference type="SMR" id="Q67XG0"/>
<dbReference type="BioGRID" id="14690">
    <property type="interactions" value="4"/>
</dbReference>
<dbReference type="FunCoup" id="Q67XG0">
    <property type="interactions" value="117"/>
</dbReference>
<dbReference type="STRING" id="3702.Q67XG0"/>
<dbReference type="PaxDb" id="3702-AT4G32690.1"/>
<dbReference type="ProteomicsDB" id="221895"/>
<dbReference type="EnsemblPlants" id="AT4G32690.1">
    <property type="protein sequence ID" value="AT4G32690.1"/>
    <property type="gene ID" value="AT4G32690"/>
</dbReference>
<dbReference type="GeneID" id="829404"/>
<dbReference type="Gramene" id="AT4G32690.1">
    <property type="protein sequence ID" value="AT4G32690.1"/>
    <property type="gene ID" value="AT4G32690"/>
</dbReference>
<dbReference type="KEGG" id="ath:AT4G32690"/>
<dbReference type="Araport" id="AT4G32690"/>
<dbReference type="TAIR" id="AT4G32690">
    <property type="gene designation" value="GLB3"/>
</dbReference>
<dbReference type="eggNOG" id="ENOG502QRXE">
    <property type="taxonomic scope" value="Eukaryota"/>
</dbReference>
<dbReference type="HOGENOM" id="CLU_103526_0_0_1"/>
<dbReference type="InParanoid" id="Q67XG0"/>
<dbReference type="OMA" id="HMQNALD"/>
<dbReference type="OrthoDB" id="1856542at2759"/>
<dbReference type="PhylomeDB" id="Q67XG0"/>
<dbReference type="EvolutionaryTrace" id="Q67XG0"/>
<dbReference type="PRO" id="PR:Q67XG0"/>
<dbReference type="Proteomes" id="UP000006548">
    <property type="component" value="Chromosome 4"/>
</dbReference>
<dbReference type="ExpressionAtlas" id="Q67XG0">
    <property type="expression patterns" value="baseline and differential"/>
</dbReference>
<dbReference type="GO" id="GO:0020037">
    <property type="term" value="F:heme binding"/>
    <property type="evidence" value="ECO:0007669"/>
    <property type="project" value="InterPro"/>
</dbReference>
<dbReference type="GO" id="GO:0046872">
    <property type="term" value="F:metal ion binding"/>
    <property type="evidence" value="ECO:0007669"/>
    <property type="project" value="UniProtKB-KW"/>
</dbReference>
<dbReference type="GO" id="GO:0019825">
    <property type="term" value="F:oxygen binding"/>
    <property type="evidence" value="ECO:0007669"/>
    <property type="project" value="InterPro"/>
</dbReference>
<dbReference type="GO" id="GO:0005344">
    <property type="term" value="F:oxygen carrier activity"/>
    <property type="evidence" value="ECO:0000314"/>
    <property type="project" value="TAIR"/>
</dbReference>
<dbReference type="GO" id="GO:0015671">
    <property type="term" value="P:oxygen transport"/>
    <property type="evidence" value="ECO:0000314"/>
    <property type="project" value="TAIR"/>
</dbReference>
<dbReference type="GO" id="GO:0009733">
    <property type="term" value="P:response to auxin"/>
    <property type="evidence" value="ECO:0000304"/>
    <property type="project" value="TAIR"/>
</dbReference>
<dbReference type="GO" id="GO:0001666">
    <property type="term" value="P:response to hypoxia"/>
    <property type="evidence" value="ECO:0000270"/>
    <property type="project" value="TAIR"/>
</dbReference>
<dbReference type="CDD" id="cd19755">
    <property type="entry name" value="TrHb2_AtGlb3-like_O"/>
    <property type="match status" value="1"/>
</dbReference>
<dbReference type="FunFam" id="1.10.490.10:FF:000031">
    <property type="entry name" value="Two-on-two hemoglobin-3"/>
    <property type="match status" value="1"/>
</dbReference>
<dbReference type="Gene3D" id="1.10.490.10">
    <property type="entry name" value="Globins"/>
    <property type="match status" value="1"/>
</dbReference>
<dbReference type="InterPro" id="IPR044203">
    <property type="entry name" value="GlbO/GLB3-like"/>
</dbReference>
<dbReference type="InterPro" id="IPR009050">
    <property type="entry name" value="Globin-like_sf"/>
</dbReference>
<dbReference type="InterPro" id="IPR012292">
    <property type="entry name" value="Globin/Proto"/>
</dbReference>
<dbReference type="InterPro" id="IPR001486">
    <property type="entry name" value="Hemoglobin_trunc"/>
</dbReference>
<dbReference type="PANTHER" id="PTHR47366">
    <property type="entry name" value="TWO-ON-TWO HEMOGLOBIN-3"/>
    <property type="match status" value="1"/>
</dbReference>
<dbReference type="PANTHER" id="PTHR47366:SF1">
    <property type="entry name" value="TWO-ON-TWO HEMOGLOBIN-3"/>
    <property type="match status" value="1"/>
</dbReference>
<dbReference type="Pfam" id="PF01152">
    <property type="entry name" value="Bac_globin"/>
    <property type="match status" value="1"/>
</dbReference>
<dbReference type="SUPFAM" id="SSF46458">
    <property type="entry name" value="Globin-like"/>
    <property type="match status" value="1"/>
</dbReference>
<keyword id="KW-0002">3D-structure</keyword>
<keyword id="KW-0349">Heme</keyword>
<keyword id="KW-0408">Iron</keyword>
<keyword id="KW-0479">Metal-binding</keyword>
<keyword id="KW-0561">Oxygen transport</keyword>
<keyword id="KW-1185">Reference proteome</keyword>
<keyword id="KW-0813">Transport</keyword>
<reference key="1">
    <citation type="journal article" date="2001" name="Proc. Natl. Acad. Sci. U.S.A.">
        <title>A hemoglobin from plants homologous to truncated hemoglobins of microorganisms.</title>
        <authorList>
            <person name="Watts R.A."/>
            <person name="Hunt P.W."/>
            <person name="Hvitved A.N."/>
            <person name="Hargrove M.S."/>
            <person name="Peacock W.J."/>
            <person name="Dennis E.S."/>
        </authorList>
    </citation>
    <scope>NUCLEOTIDE SEQUENCE [MRNA]</scope>
    <scope>TISSUE SPECIFICITY</scope>
    <scope>DIMERIZATION</scope>
    <scope>BIOPHYSICOCHEMICAL PROPERTIES</scope>
    <scope>FUNCTION</scope>
    <source>
        <strain>cv. Columbia</strain>
    </source>
</reference>
<reference key="2">
    <citation type="journal article" date="1999" name="Nature">
        <title>Sequence and analysis of chromosome 4 of the plant Arabidopsis thaliana.</title>
        <authorList>
            <person name="Mayer K.F.X."/>
            <person name="Schueller C."/>
            <person name="Wambutt R."/>
            <person name="Murphy G."/>
            <person name="Volckaert G."/>
            <person name="Pohl T."/>
            <person name="Duesterhoeft A."/>
            <person name="Stiekema W."/>
            <person name="Entian K.-D."/>
            <person name="Terryn N."/>
            <person name="Harris B."/>
            <person name="Ansorge W."/>
            <person name="Brandt P."/>
            <person name="Grivell L.A."/>
            <person name="Rieger M."/>
            <person name="Weichselgartner M."/>
            <person name="de Simone V."/>
            <person name="Obermaier B."/>
            <person name="Mache R."/>
            <person name="Mueller M."/>
            <person name="Kreis M."/>
            <person name="Delseny M."/>
            <person name="Puigdomenech P."/>
            <person name="Watson M."/>
            <person name="Schmidtheini T."/>
            <person name="Reichert B."/>
            <person name="Portetelle D."/>
            <person name="Perez-Alonso M."/>
            <person name="Boutry M."/>
            <person name="Bancroft I."/>
            <person name="Vos P."/>
            <person name="Hoheisel J."/>
            <person name="Zimmermann W."/>
            <person name="Wedler H."/>
            <person name="Ridley P."/>
            <person name="Langham S.-A."/>
            <person name="McCullagh B."/>
            <person name="Bilham L."/>
            <person name="Robben J."/>
            <person name="van der Schueren J."/>
            <person name="Grymonprez B."/>
            <person name="Chuang Y.-J."/>
            <person name="Vandenbussche F."/>
            <person name="Braeken M."/>
            <person name="Weltjens I."/>
            <person name="Voet M."/>
            <person name="Bastiaens I."/>
            <person name="Aert R."/>
            <person name="Defoor E."/>
            <person name="Weitzenegger T."/>
            <person name="Bothe G."/>
            <person name="Ramsperger U."/>
            <person name="Hilbert H."/>
            <person name="Braun M."/>
            <person name="Holzer E."/>
            <person name="Brandt A."/>
            <person name="Peters S."/>
            <person name="van Staveren M."/>
            <person name="Dirkse W."/>
            <person name="Mooijman P."/>
            <person name="Klein Lankhorst R."/>
            <person name="Rose M."/>
            <person name="Hauf J."/>
            <person name="Koetter P."/>
            <person name="Berneiser S."/>
            <person name="Hempel S."/>
            <person name="Feldpausch M."/>
            <person name="Lamberth S."/>
            <person name="Van den Daele H."/>
            <person name="De Keyser A."/>
            <person name="Buysshaert C."/>
            <person name="Gielen J."/>
            <person name="Villarroel R."/>
            <person name="De Clercq R."/>
            <person name="van Montagu M."/>
            <person name="Rogers J."/>
            <person name="Cronin A."/>
            <person name="Quail M.A."/>
            <person name="Bray-Allen S."/>
            <person name="Clark L."/>
            <person name="Doggett J."/>
            <person name="Hall S."/>
            <person name="Kay M."/>
            <person name="Lennard N."/>
            <person name="McLay K."/>
            <person name="Mayes R."/>
            <person name="Pettett A."/>
            <person name="Rajandream M.A."/>
            <person name="Lyne M."/>
            <person name="Benes V."/>
            <person name="Rechmann S."/>
            <person name="Borkova D."/>
            <person name="Bloecker H."/>
            <person name="Scharfe M."/>
            <person name="Grimm M."/>
            <person name="Loehnert T.-H."/>
            <person name="Dose S."/>
            <person name="de Haan M."/>
            <person name="Maarse A.C."/>
            <person name="Schaefer M."/>
            <person name="Mueller-Auer S."/>
            <person name="Gabel C."/>
            <person name="Fuchs M."/>
            <person name="Fartmann B."/>
            <person name="Granderath K."/>
            <person name="Dauner D."/>
            <person name="Herzl A."/>
            <person name="Neumann S."/>
            <person name="Argiriou A."/>
            <person name="Vitale D."/>
            <person name="Liguori R."/>
            <person name="Piravandi E."/>
            <person name="Massenet O."/>
            <person name="Quigley F."/>
            <person name="Clabauld G."/>
            <person name="Muendlein A."/>
            <person name="Felber R."/>
            <person name="Schnabl S."/>
            <person name="Hiller R."/>
            <person name="Schmidt W."/>
            <person name="Lecharny A."/>
            <person name="Aubourg S."/>
            <person name="Chefdor F."/>
            <person name="Cooke R."/>
            <person name="Berger C."/>
            <person name="Monfort A."/>
            <person name="Casacuberta E."/>
            <person name="Gibbons T."/>
            <person name="Weber N."/>
            <person name="Vandenbol M."/>
            <person name="Bargues M."/>
            <person name="Terol J."/>
            <person name="Torres A."/>
            <person name="Perez-Perez A."/>
            <person name="Purnelle B."/>
            <person name="Bent E."/>
            <person name="Johnson S."/>
            <person name="Tacon D."/>
            <person name="Jesse T."/>
            <person name="Heijnen L."/>
            <person name="Schwarz S."/>
            <person name="Scholler P."/>
            <person name="Heber S."/>
            <person name="Francs P."/>
            <person name="Bielke C."/>
            <person name="Frishman D."/>
            <person name="Haase D."/>
            <person name="Lemcke K."/>
            <person name="Mewes H.-W."/>
            <person name="Stocker S."/>
            <person name="Zaccaria P."/>
            <person name="Bevan M."/>
            <person name="Wilson R.K."/>
            <person name="de la Bastide M."/>
            <person name="Habermann K."/>
            <person name="Parnell L."/>
            <person name="Dedhia N."/>
            <person name="Gnoj L."/>
            <person name="Schutz K."/>
            <person name="Huang E."/>
            <person name="Spiegel L."/>
            <person name="Sekhon M."/>
            <person name="Murray J."/>
            <person name="Sheet P."/>
            <person name="Cordes M."/>
            <person name="Abu-Threideh J."/>
            <person name="Stoneking T."/>
            <person name="Kalicki J."/>
            <person name="Graves T."/>
            <person name="Harmon G."/>
            <person name="Edwards J."/>
            <person name="Latreille P."/>
            <person name="Courtney L."/>
            <person name="Cloud J."/>
            <person name="Abbott A."/>
            <person name="Scott K."/>
            <person name="Johnson D."/>
            <person name="Minx P."/>
            <person name="Bentley D."/>
            <person name="Fulton B."/>
            <person name="Miller N."/>
            <person name="Greco T."/>
            <person name="Kemp K."/>
            <person name="Kramer J."/>
            <person name="Fulton L."/>
            <person name="Mardis E."/>
            <person name="Dante M."/>
            <person name="Pepin K."/>
            <person name="Hillier L.W."/>
            <person name="Nelson J."/>
            <person name="Spieth J."/>
            <person name="Ryan E."/>
            <person name="Andrews S."/>
            <person name="Geisel C."/>
            <person name="Layman D."/>
            <person name="Du H."/>
            <person name="Ali J."/>
            <person name="Berghoff A."/>
            <person name="Jones K."/>
            <person name="Drone K."/>
            <person name="Cotton M."/>
            <person name="Joshu C."/>
            <person name="Antonoiu B."/>
            <person name="Zidanic M."/>
            <person name="Strong C."/>
            <person name="Sun H."/>
            <person name="Lamar B."/>
            <person name="Yordan C."/>
            <person name="Ma P."/>
            <person name="Zhong J."/>
            <person name="Preston R."/>
            <person name="Vil D."/>
            <person name="Shekher M."/>
            <person name="Matero A."/>
            <person name="Shah R."/>
            <person name="Swaby I.K."/>
            <person name="O'Shaughnessy A."/>
            <person name="Rodriguez M."/>
            <person name="Hoffman J."/>
            <person name="Till S."/>
            <person name="Granat S."/>
            <person name="Shohdy N."/>
            <person name="Hasegawa A."/>
            <person name="Hameed A."/>
            <person name="Lodhi M."/>
            <person name="Johnson A."/>
            <person name="Chen E."/>
            <person name="Marra M.A."/>
            <person name="Martienssen R."/>
            <person name="McCombie W.R."/>
        </authorList>
    </citation>
    <scope>NUCLEOTIDE SEQUENCE [LARGE SCALE GENOMIC DNA]</scope>
    <source>
        <strain>cv. Columbia</strain>
    </source>
</reference>
<reference key="3">
    <citation type="journal article" date="2017" name="Plant J.">
        <title>Araport11: a complete reannotation of the Arabidopsis thaliana reference genome.</title>
        <authorList>
            <person name="Cheng C.Y."/>
            <person name="Krishnakumar V."/>
            <person name="Chan A.P."/>
            <person name="Thibaud-Nissen F."/>
            <person name="Schobel S."/>
            <person name="Town C.D."/>
        </authorList>
    </citation>
    <scope>GENOME REANNOTATION</scope>
    <source>
        <strain>cv. Columbia</strain>
    </source>
</reference>
<reference key="4">
    <citation type="submission" date="2004-09" db="EMBL/GenBank/DDBJ databases">
        <title>Large-scale analysis of RIKEN Arabidopsis full-length (RAFL) cDNAs.</title>
        <authorList>
            <person name="Totoki Y."/>
            <person name="Seki M."/>
            <person name="Ishida J."/>
            <person name="Nakajima M."/>
            <person name="Enju A."/>
            <person name="Kamiya A."/>
            <person name="Narusaka M."/>
            <person name="Shin-i T."/>
            <person name="Nakagawa M."/>
            <person name="Sakamoto N."/>
            <person name="Oishi K."/>
            <person name="Kohara Y."/>
            <person name="Kobayashi M."/>
            <person name="Toyoda A."/>
            <person name="Sakaki Y."/>
            <person name="Sakurai T."/>
            <person name="Iida K."/>
            <person name="Akiyama K."/>
            <person name="Satou M."/>
            <person name="Toyoda T."/>
            <person name="Konagaya A."/>
            <person name="Carninci P."/>
            <person name="Kawai J."/>
            <person name="Hayashizaki Y."/>
            <person name="Shinozaki K."/>
        </authorList>
    </citation>
    <scope>NUCLEOTIDE SEQUENCE [LARGE SCALE MRNA]</scope>
    <source>
        <strain>cv. Columbia</strain>
    </source>
</reference>
<reference key="5">
    <citation type="submission" date="2006-03" db="EMBL/GenBank/DDBJ databases">
        <title>Arabidopsis ORF clones.</title>
        <authorList>
            <person name="Shinn P."/>
            <person name="Chen H."/>
            <person name="Kim C.J."/>
            <person name="Ecker J.R."/>
        </authorList>
    </citation>
    <scope>NUCLEOTIDE SEQUENCE [LARGE SCALE MRNA]</scope>
    <source>
        <strain>cv. Columbia</strain>
    </source>
</reference>
<reference key="6">
    <citation type="journal article" date="2011" name="Plant Physiol. Biochem.">
        <title>Manipulation of hemoglobin expression affects Arabidopsis shoot organogenesis.</title>
        <authorList>
            <person name="Wang Y."/>
            <person name="Elhiti M."/>
            <person name="Hebelstrup K.H."/>
            <person name="Hill R.D."/>
            <person name="Stasolla C."/>
        </authorList>
    </citation>
    <scope>DISRUPTION PHENOTYPE</scope>
    <scope>FUNCTION</scope>
    <source>
        <strain>cv. Columbia</strain>
    </source>
</reference>
<reference key="7">
    <citation type="journal article" date="2016" name="Plant Cell Physiol.">
        <title>The Arabidopsis iron-sulfur protein GRXS17 is a target of the ubiquitin E3 ligases RGLG3 and RGLG4.</title>
        <authorList>
            <person name="Nagels Durand A."/>
            <person name="Inigo S."/>
            <person name="Ritter A."/>
            <person name="Iniesto E."/>
            <person name="De Clercq R."/>
            <person name="Staes A."/>
            <person name="Van Leene J."/>
            <person name="Rubio V."/>
            <person name="Gevaert K."/>
            <person name="De Jaeger G."/>
            <person name="Pauwels L."/>
            <person name="Goossens A."/>
        </authorList>
    </citation>
    <scope>FUNCTION</scope>
    <scope>INTERACTION WITH RGLG3 AND RGLG4</scope>
</reference>
<reference key="8">
    <citation type="journal article" date="2014" name="Acta Crystallogr. D">
        <title>The structure of a class 3 nonsymbiotic plant haemoglobin from Arabidopsis thaliana reveals a novel N-terminal helical extension.</title>
        <authorList>
            <person name="Reeder B.J."/>
            <person name="Hough M.A."/>
        </authorList>
    </citation>
    <scope>X-RAY CRYSTALLOGRAPHY (1.77 ANGSTROMS) IN COMPLEX WITH HEME</scope>
</reference>
<proteinExistence type="evidence at protein level"/>
<feature type="chain" id="PRO_0000425543" description="Two-on-two hemoglobin-3">
    <location>
        <begin position="1"/>
        <end position="175"/>
    </location>
</feature>
<feature type="region of interest" description="Disordered" evidence="2">
    <location>
        <begin position="153"/>
        <end position="175"/>
    </location>
</feature>
<feature type="binding site" evidence="1">
    <location>
        <position position="85"/>
    </location>
    <ligand>
        <name>heme</name>
        <dbReference type="ChEBI" id="CHEBI:30413"/>
    </ligand>
</feature>
<feature type="binding site" description="proximal binding residue" evidence="5 8 9">
    <location>
        <position position="98"/>
    </location>
    <ligand>
        <name>heme</name>
        <dbReference type="ChEBI" id="CHEBI:30413"/>
    </ligand>
    <ligandPart>
        <name>Fe</name>
        <dbReference type="ChEBI" id="CHEBI:18248"/>
    </ligandPart>
</feature>
<feature type="sequence conflict" description="In Ref. 1; AAK55409." evidence="7" ref="1">
    <original>H</original>
    <variation>P</variation>
    <location>
        <position position="167"/>
    </location>
</feature>
<feature type="helix" evidence="10">
    <location>
        <begin position="4"/>
        <end position="12"/>
    </location>
</feature>
<feature type="helix" evidence="10">
    <location>
        <begin position="16"/>
        <end position="19"/>
    </location>
</feature>
<feature type="helix" evidence="10">
    <location>
        <begin position="20"/>
        <end position="24"/>
    </location>
</feature>
<feature type="helix" evidence="10">
    <location>
        <begin position="27"/>
        <end position="31"/>
    </location>
</feature>
<feature type="helix" evidence="10">
    <location>
        <begin position="33"/>
        <end position="48"/>
    </location>
</feature>
<feature type="helix" evidence="10">
    <location>
        <begin position="53"/>
        <end position="56"/>
    </location>
</feature>
<feature type="helix" evidence="10">
    <location>
        <begin position="57"/>
        <end position="59"/>
    </location>
</feature>
<feature type="helix" evidence="10">
    <location>
        <begin position="64"/>
        <end position="78"/>
    </location>
</feature>
<feature type="helix" evidence="10">
    <location>
        <begin position="84"/>
        <end position="89"/>
    </location>
</feature>
<feature type="helix" evidence="10">
    <location>
        <begin position="94"/>
        <end position="98"/>
    </location>
</feature>
<feature type="helix" evidence="10">
    <location>
        <begin position="105"/>
        <end position="121"/>
    </location>
</feature>
<feature type="helix" evidence="10">
    <location>
        <begin position="127"/>
        <end position="148"/>
    </location>
</feature>
<evidence type="ECO:0000250" key="1"/>
<evidence type="ECO:0000256" key="2">
    <source>
        <dbReference type="SAM" id="MobiDB-lite"/>
    </source>
</evidence>
<evidence type="ECO:0000269" key="3">
    <source>
    </source>
</evidence>
<evidence type="ECO:0000269" key="4">
    <source>
    </source>
</evidence>
<evidence type="ECO:0000269" key="5">
    <source>
    </source>
</evidence>
<evidence type="ECO:0000269" key="6">
    <source>
    </source>
</evidence>
<evidence type="ECO:0000305" key="7"/>
<evidence type="ECO:0007744" key="8">
    <source>
        <dbReference type="PDB" id="4C0N"/>
    </source>
</evidence>
<evidence type="ECO:0007744" key="9">
    <source>
        <dbReference type="PDB" id="4C44"/>
    </source>
</evidence>
<evidence type="ECO:0007829" key="10">
    <source>
        <dbReference type="PDB" id="4C0N"/>
    </source>
</evidence>